<sequence length="513" mass="58777">MLDDVAFIKTPAAKKQPPASNECGVWTTDSPAIHNAPLPADGPGSTSFSNTILFSILALVPGYITYKLGLGFKTWVFFFLILAIPILMAYWSIMSTFSPRINEKVKYPNRPISYYLEFHTPELKAKYETSNGGKGSKIPIETFQELYFDGKVSFKGDCLDVLEYKHDWASFRFTLGLFRFFLLGMIPEVIFHSQSQDEEQVRDHYDRGDDFYTWFLGPRMIYTSGVISDITREETLEELQDNKLTVMADKIDLKKGDHVLDIGCGWGTWTTFASSKYGANVTGITLGRNQTKWGNTLLKEYGIPSDQSRIVCCDYRDAPKSSKPSGKYDKITSVEMAEHVGIRRLTAYLEQCRDALEDDGLLFLQYSGLRKNWQYEDLEWGLFMNKYIFPGADASTPLSFFASCMESVGFEIVSVDNIGVHYSATLWRWYRNWIGNKDKVVNKYGVKWYRIWEFFLGSSVVASRNGTATCYQFICRKNINSYRRIDYVPQQKGLQGPVQEGTKWAKEFTNFYD</sequence>
<keyword id="KW-0444">Lipid biosynthesis</keyword>
<keyword id="KW-0443">Lipid metabolism</keyword>
<keyword id="KW-0472">Membrane</keyword>
<keyword id="KW-0489">Methyltransferase</keyword>
<keyword id="KW-1185">Reference proteome</keyword>
<keyword id="KW-0949">S-adenosyl-L-methionine</keyword>
<keyword id="KW-0746">Sphingolipid metabolism</keyword>
<keyword id="KW-0808">Transferase</keyword>
<keyword id="KW-0812">Transmembrane</keyword>
<keyword id="KW-1133">Transmembrane helix</keyword>
<dbReference type="EC" id="2.1.1.317" evidence="4"/>
<dbReference type="EMBL" id="CP017623">
    <property type="protein sequence ID" value="AOW26600.1"/>
    <property type="molecule type" value="Genomic_DNA"/>
</dbReference>
<dbReference type="RefSeq" id="XP_723517.1">
    <property type="nucleotide sequence ID" value="XM_718424.1"/>
</dbReference>
<dbReference type="SMR" id="Q5APD4"/>
<dbReference type="STRING" id="237561.Q5APD4"/>
<dbReference type="EnsemblFungi" id="C1_09680W_A-T">
    <property type="protein sequence ID" value="C1_09680W_A-T-p1"/>
    <property type="gene ID" value="C1_09680W_A"/>
</dbReference>
<dbReference type="GeneID" id="3634873"/>
<dbReference type="KEGG" id="cal:CAALFM_C109680WA"/>
<dbReference type="CGD" id="CAL0000177730">
    <property type="gene designation" value="MTS1"/>
</dbReference>
<dbReference type="VEuPathDB" id="FungiDB:C1_09680W_A"/>
<dbReference type="eggNOG" id="ENOG502QS47">
    <property type="taxonomic scope" value="Eukaryota"/>
</dbReference>
<dbReference type="HOGENOM" id="CLU_026434_5_0_1"/>
<dbReference type="InParanoid" id="Q5APD4"/>
<dbReference type="OMA" id="GFKTWLF"/>
<dbReference type="OrthoDB" id="412182at2759"/>
<dbReference type="UniPathway" id="UPA00222"/>
<dbReference type="PRO" id="PR:Q5APD4"/>
<dbReference type="Proteomes" id="UP000000559">
    <property type="component" value="Chromosome 1"/>
</dbReference>
<dbReference type="GO" id="GO:1903561">
    <property type="term" value="C:extracellular vesicle"/>
    <property type="evidence" value="ECO:0000314"/>
    <property type="project" value="CGD"/>
</dbReference>
<dbReference type="GO" id="GO:0005886">
    <property type="term" value="C:plasma membrane"/>
    <property type="evidence" value="ECO:0000314"/>
    <property type="project" value="CGD"/>
</dbReference>
<dbReference type="GO" id="GO:0008168">
    <property type="term" value="F:methyltransferase activity"/>
    <property type="evidence" value="ECO:0000315"/>
    <property type="project" value="CGD"/>
</dbReference>
<dbReference type="GO" id="GO:0030447">
    <property type="term" value="P:filamentous growth"/>
    <property type="evidence" value="ECO:0000315"/>
    <property type="project" value="CGD"/>
</dbReference>
<dbReference type="GO" id="GO:0006679">
    <property type="term" value="P:glucosylceramide biosynthetic process"/>
    <property type="evidence" value="ECO:0000315"/>
    <property type="project" value="CGD"/>
</dbReference>
<dbReference type="GO" id="GO:0032259">
    <property type="term" value="P:methylation"/>
    <property type="evidence" value="ECO:0007669"/>
    <property type="project" value="UniProtKB-KW"/>
</dbReference>
<dbReference type="CDD" id="cd02440">
    <property type="entry name" value="AdoMet_MTases"/>
    <property type="match status" value="1"/>
</dbReference>
<dbReference type="Gene3D" id="3.40.50.150">
    <property type="entry name" value="Vaccinia Virus protein VP39"/>
    <property type="match status" value="1"/>
</dbReference>
<dbReference type="InterPro" id="IPR029063">
    <property type="entry name" value="SAM-dependent_MTases_sf"/>
</dbReference>
<dbReference type="InterPro" id="IPR052290">
    <property type="entry name" value="Sphingo_C9-MT"/>
</dbReference>
<dbReference type="PANTHER" id="PTHR45197:SF1">
    <property type="entry name" value="SPHINGOLIPID C9-METHYLTRANSFERASE A-RELATED"/>
    <property type="match status" value="1"/>
</dbReference>
<dbReference type="PANTHER" id="PTHR45197">
    <property type="entry name" value="SYNTHASE, PUTATIVE (AFU_ORTHOLOGUE AFUA_7G04190)-RELATED"/>
    <property type="match status" value="1"/>
</dbReference>
<dbReference type="Pfam" id="PF02353">
    <property type="entry name" value="CMAS"/>
    <property type="match status" value="1"/>
</dbReference>
<dbReference type="SUPFAM" id="SSF53335">
    <property type="entry name" value="S-adenosyl-L-methionine-dependent methyltransferases"/>
    <property type="match status" value="1"/>
</dbReference>
<proteinExistence type="evidence at protein level"/>
<gene>
    <name evidence="5" type="primary">MTS1</name>
    <name type="synonym">CFA1</name>
    <name type="ordered locus">CAALFM_C109680WA</name>
    <name type="ORF">CaO19.12294</name>
    <name type="ORF">CaO19.4831</name>
</gene>
<feature type="chain" id="PRO_0000434799" description="Sphingolipid C9-methyltransferase">
    <location>
        <begin position="1"/>
        <end position="513"/>
    </location>
</feature>
<feature type="transmembrane region" description="Helical" evidence="3">
    <location>
        <begin position="52"/>
        <end position="72"/>
    </location>
</feature>
<feature type="transmembrane region" description="Helical" evidence="3">
    <location>
        <begin position="74"/>
        <end position="94"/>
    </location>
</feature>
<feature type="binding site" evidence="2">
    <location>
        <begin position="222"/>
        <end position="223"/>
    </location>
    <ligand>
        <name>S-adenosyl-L-methionine</name>
        <dbReference type="ChEBI" id="CHEBI:59789"/>
    </ligand>
</feature>
<feature type="binding site" evidence="2">
    <location>
        <begin position="259"/>
        <end position="267"/>
    </location>
    <ligand>
        <name>S-adenosyl-L-methionine</name>
        <dbReference type="ChEBI" id="CHEBI:59789"/>
    </ligand>
</feature>
<feature type="binding site" evidence="2">
    <location>
        <begin position="285"/>
        <end position="290"/>
    </location>
    <ligand>
        <name>S-adenosyl-L-methionine</name>
        <dbReference type="ChEBI" id="CHEBI:59789"/>
    </ligand>
</feature>
<feature type="binding site" evidence="2">
    <location>
        <begin position="315"/>
        <end position="316"/>
    </location>
    <ligand>
        <name>S-adenosyl-L-methionine</name>
        <dbReference type="ChEBI" id="CHEBI:59789"/>
    </ligand>
</feature>
<organism>
    <name type="scientific">Candida albicans (strain SC5314 / ATCC MYA-2876)</name>
    <name type="common">Yeast</name>
    <dbReference type="NCBI Taxonomy" id="237561"/>
    <lineage>
        <taxon>Eukaryota</taxon>
        <taxon>Fungi</taxon>
        <taxon>Dikarya</taxon>
        <taxon>Ascomycota</taxon>
        <taxon>Saccharomycotina</taxon>
        <taxon>Pichiomycetes</taxon>
        <taxon>Debaryomycetaceae</taxon>
        <taxon>Candida/Lodderomyces clade</taxon>
        <taxon>Candida</taxon>
    </lineage>
</organism>
<evidence type="ECO:0000250" key="1">
    <source>
        <dbReference type="UniProtKB" id="C4R7Z3"/>
    </source>
</evidence>
<evidence type="ECO:0000250" key="2">
    <source>
        <dbReference type="UniProtKB" id="P9WPB7"/>
    </source>
</evidence>
<evidence type="ECO:0000255" key="3"/>
<evidence type="ECO:0000269" key="4">
    <source>
    </source>
</evidence>
<evidence type="ECO:0000303" key="5">
    <source>
    </source>
</evidence>
<evidence type="ECO:0000305" key="6"/>
<evidence type="ECO:0000305" key="7">
    <source>
    </source>
</evidence>
<name>C9MT_CANAL</name>
<comment type="function">
    <text evidence="4">Catalyzes methylation of the sphingoid base component of glucosylceramides (GluCers) at the C9-position. Sphingolipid C9-methylation requires 4,8-desaturated ceramides as substrates. Glucosylceramides play important roles in growth, differentiation and pathogenicity. The methyl group at the C9-position distinguishes fungal glucosylceramides from those of plants and animals, and may thus play a role in host-pathogen interactions enabling the host to recognize the fungal attack and initiate specific defense responses. Not necessary for vegetative growth at low temperatures, but plays a role in hyphal formation on solid medium.</text>
</comment>
<comment type="catalytic activity">
    <reaction evidence="4">
        <text>a (4E,8E)-4-sphinga-4,8-dienine ceramide + S-adenosyl-L-methionine = a 9-methyl-(4E,8E)-sphinga-4,8-dienine ceramide + S-adenosyl-L-homocysteine + H(+)</text>
        <dbReference type="Rhea" id="RHEA:46804"/>
        <dbReference type="ChEBI" id="CHEBI:15378"/>
        <dbReference type="ChEBI" id="CHEBI:57856"/>
        <dbReference type="ChEBI" id="CHEBI:59789"/>
        <dbReference type="ChEBI" id="CHEBI:85953"/>
        <dbReference type="ChEBI" id="CHEBI:87033"/>
        <dbReference type="EC" id="2.1.1.317"/>
    </reaction>
</comment>
<comment type="pathway">
    <text evidence="7">Lipid metabolism; sphingolipid metabolism.</text>
</comment>
<comment type="subcellular location">
    <subcellularLocation>
        <location evidence="1">Membrane</location>
        <topology evidence="3">Multi-pass membrane protein</topology>
    </subcellularLocation>
</comment>
<comment type="disruption phenotype">
    <text evidence="4">Produces only non-methylated glucosylceramides. Has a decreased hyphal growth rate.</text>
</comment>
<comment type="similarity">
    <text evidence="6">Belongs to the CFA/CMAS family.</text>
</comment>
<protein>
    <recommendedName>
        <fullName evidence="5">Sphingolipid C9-methyltransferase</fullName>
        <shortName>C-9-MT</shortName>
        <ecNumber evidence="4">2.1.1.317</ecNumber>
    </recommendedName>
    <alternativeName>
        <fullName>Cyclopropane fatty acyl phospholipid synthase homolog 1</fullName>
    </alternativeName>
    <alternativeName>
        <fullName evidence="5">Methyltransferase for sphingolipid 1</fullName>
    </alternativeName>
</protein>
<accession>Q5APD4</accession>
<accession>A0A1D8PES8</accession>
<reference key="1">
    <citation type="journal article" date="2004" name="Proc. Natl. Acad. Sci. U.S.A.">
        <title>The diploid genome sequence of Candida albicans.</title>
        <authorList>
            <person name="Jones T."/>
            <person name="Federspiel N.A."/>
            <person name="Chibana H."/>
            <person name="Dungan J."/>
            <person name="Kalman S."/>
            <person name="Magee B.B."/>
            <person name="Newport G."/>
            <person name="Thorstenson Y.R."/>
            <person name="Agabian N."/>
            <person name="Magee P.T."/>
            <person name="Davis R.W."/>
            <person name="Scherer S."/>
        </authorList>
    </citation>
    <scope>NUCLEOTIDE SEQUENCE [LARGE SCALE GENOMIC DNA]</scope>
    <source>
        <strain>SC5314 / ATCC MYA-2876</strain>
    </source>
</reference>
<reference key="2">
    <citation type="journal article" date="2007" name="Genome Biol.">
        <title>Assembly of the Candida albicans genome into sixteen supercontigs aligned on the eight chromosomes.</title>
        <authorList>
            <person name="van het Hoog M."/>
            <person name="Rast T.J."/>
            <person name="Martchenko M."/>
            <person name="Grindle S."/>
            <person name="Dignard D."/>
            <person name="Hogues H."/>
            <person name="Cuomo C."/>
            <person name="Berriman M."/>
            <person name="Scherer S."/>
            <person name="Magee B.B."/>
            <person name="Whiteway M."/>
            <person name="Chibana H."/>
            <person name="Nantel A."/>
            <person name="Magee P.T."/>
        </authorList>
    </citation>
    <scope>GENOME REANNOTATION</scope>
    <source>
        <strain>SC5314 / ATCC MYA-2876</strain>
    </source>
</reference>
<reference key="3">
    <citation type="journal article" date="2013" name="Genome Biol.">
        <title>Assembly of a phased diploid Candida albicans genome facilitates allele-specific measurements and provides a simple model for repeat and indel structure.</title>
        <authorList>
            <person name="Muzzey D."/>
            <person name="Schwartz K."/>
            <person name="Weissman J.S."/>
            <person name="Sherlock G."/>
        </authorList>
    </citation>
    <scope>NUCLEOTIDE SEQUENCE [LARGE SCALE GENOMIC DNA]</scope>
    <scope>GENOME REANNOTATION</scope>
    <source>
        <strain>SC5314 / ATCC MYA-2876</strain>
    </source>
</reference>
<reference key="4">
    <citation type="journal article" date="2010" name="Microbiology">
        <title>Candida albicans sphingolipid C9-methyltransferase is involved in hyphal elongation.</title>
        <authorList>
            <person name="Oura T."/>
            <person name="Kajiwara S."/>
        </authorList>
    </citation>
    <scope>FUNCTION</scope>
    <scope>CATALYTIC ACTIVITY</scope>
    <scope>PATHWAY</scope>
    <scope>DISRUPTION PHENOTYPE</scope>
</reference>